<reference key="1">
    <citation type="journal article" date="1988" name="Virology">
        <title>The location, sequence, transcription, and regulation of a baculovirus DNA polymerase gene.</title>
        <authorList>
            <person name="Tomalski M.D."/>
            <person name="Wu J.G."/>
            <person name="Miller L.K."/>
        </authorList>
    </citation>
    <scope>NUCLEOTIDE SEQUENCE [GENOMIC DNA]</scope>
    <source>
        <strain>L1</strain>
    </source>
</reference>
<reference key="2">
    <citation type="journal article" date="1994" name="Virology">
        <title>The complete DNA sequence of Autographa californica nuclear polyhedrosis virus.</title>
        <authorList>
            <person name="Ayres M.D."/>
            <person name="Howard S.C."/>
            <person name="Kuzio J."/>
            <person name="Lopez-Ferber M."/>
            <person name="Possee R.D."/>
        </authorList>
    </citation>
    <scope>NUCLEOTIDE SEQUENCE [LARGE SCALE GENOMIC DNA]</scope>
    <source>
        <strain>C6</strain>
    </source>
</reference>
<reference key="3">
    <citation type="journal article" date="2005" name="Virology">
        <title>Characterization of the replication of a baculovirus mutant lacking the DNA polymerase gene.</title>
        <authorList>
            <person name="Vanarsdall A.L."/>
            <person name="Okano K."/>
            <person name="Rohrmann G.F."/>
        </authorList>
    </citation>
    <scope>FUNCTION</scope>
</reference>
<reference key="4">
    <citation type="journal article" date="2014" name="J. Virol.">
        <title>Autographa californica multiple nucleopolyhedrovirus DNA polymerase C terminus is required for nuclear localization and viral DNA replication.</title>
        <authorList>
            <person name="Feng G."/>
            <person name="Krell P.J."/>
        </authorList>
    </citation>
    <scope>SUBCELLULAR LOCATION</scope>
</reference>
<gene>
    <name type="primary">POL</name>
    <name type="ORF">ORF65</name>
</gene>
<organism>
    <name type="scientific">Autographa californica nuclear polyhedrosis virus</name>
    <name type="common">AcMNPV</name>
    <dbReference type="NCBI Taxonomy" id="46015"/>
    <lineage>
        <taxon>Viruses</taxon>
        <taxon>Viruses incertae sedis</taxon>
        <taxon>Naldaviricetes</taxon>
        <taxon>Lefavirales</taxon>
        <taxon>Baculoviridae</taxon>
        <taxon>Alphabaculovirus</taxon>
        <taxon>Alphabaculovirus aucalifornicae</taxon>
    </lineage>
</organism>
<proteinExistence type="inferred from homology"/>
<comment type="function">
    <text evidence="2">Replicates the viral genome, host DNA polymerases cannot substitute for the viral enzyme in this process.</text>
</comment>
<comment type="catalytic activity">
    <reaction>
        <text>DNA(n) + a 2'-deoxyribonucleoside 5'-triphosphate = DNA(n+1) + diphosphate</text>
        <dbReference type="Rhea" id="RHEA:22508"/>
        <dbReference type="Rhea" id="RHEA-COMP:17339"/>
        <dbReference type="Rhea" id="RHEA-COMP:17340"/>
        <dbReference type="ChEBI" id="CHEBI:33019"/>
        <dbReference type="ChEBI" id="CHEBI:61560"/>
        <dbReference type="ChEBI" id="CHEBI:173112"/>
        <dbReference type="EC" id="2.7.7.7"/>
    </reaction>
</comment>
<comment type="subcellular location">
    <subcellularLocation>
        <location evidence="3">Host nucleus</location>
    </subcellularLocation>
</comment>
<comment type="similarity">
    <text evidence="4">Belongs to the DNA polymerase type-B family.</text>
</comment>
<sequence>MKIYPYNELKTRFAEYAKPGEFNITSADTFRIIRLHYDEKQGCLFAFCNTNIKERVLQFYFKVKLNLYSYKQCYDKHIFPSCRNKCISYTTFVAPGVEGNYLNKINVIKYERNKAAPSDNAACLDKFLHNVNRVHMQTPFVEGAYMRFKKTQRCQNNYVGGSTTRMFNLQHFNEDFELVDEMTLTSGIMPVLSCYDIETHSDGHNMSKASVDCIMSIGFVVYKNDEYAKFCFMYHKLPTQIPETYDDDTYVVMFQNEIDMITAFFDMIKITNPDVILDFNGDVFDLPYILGRLNKTKMLLKRYDLPAAAPTTKLFINKLGNKVDTYYFNYYIHIDLYKFFSSDSNQHKVENFQLNTISSYYLGENKIDLPWTEMVKMYNTRRLDVIAKYNVQDCMLPIKLFVKLKMADSVYSQCILHRLCTDDVICNISHLISVACFYAAITNTRINESTGKEEPDPYFFNKNDLSIISGQFKADKAAAGISNLKRKLIPLKNIPKDAINLGPANQTVKYKGGKVLKPRAGIYKNAFSLDFNSLYLTIMIAICACLSNLILCEDGNVYLNHNSRAIVVKLLLKLLSERCKFKKNRDNQSESAFLYDLYDQKQNSVKRTANSIYGYYGIFYKVLANYITRVGRNQLRLAISLIEGLSNDPEILEKFNLGSITFKVVYGDTDSTFVLPTFNYNEISNETDTLKQICTHVETRVNNSFTDGYKMAFENLMKVLILLKKKKYCYLNSENKIVYKGWLVKKDMPVFMRIAFRTAVEQILRHLDMDKCLQSLQTSFYEYYDEFAKSKSLTDYSFSMTYNDNPGKKRKSTDDNEGPSPKRRVITVARHCREILVNKGTDFVPGNGDRIPYLLIDIEGKVTEKAYPLRLFDPVKMRISWIKHMGILCTFMNELLEIFGDEQKDKIAKCFTAIMQKYMQNQLYDRKEPVLVKINQKKCSVKRKRDDDDDNDDDDDDDCDSSDSENDTQCANNTYKFCLYKMKK</sequence>
<dbReference type="EC" id="2.7.7.7"/>
<dbReference type="EMBL" id="M20744">
    <property type="protein sequence ID" value="AAA46692.1"/>
    <property type="molecule type" value="Genomic_DNA"/>
</dbReference>
<dbReference type="EMBL" id="L22858">
    <property type="protein sequence ID" value="AAA66695.1"/>
    <property type="molecule type" value="Genomic_DNA"/>
</dbReference>
<dbReference type="PIR" id="A31832">
    <property type="entry name" value="DJNVCP"/>
</dbReference>
<dbReference type="SMR" id="P18131"/>
<dbReference type="KEGG" id="vg:1403898"/>
<dbReference type="OrthoDB" id="165at10239"/>
<dbReference type="Proteomes" id="UP000008292">
    <property type="component" value="Segment"/>
</dbReference>
<dbReference type="GO" id="GO:0042025">
    <property type="term" value="C:host cell nucleus"/>
    <property type="evidence" value="ECO:0007669"/>
    <property type="project" value="UniProtKB-SubCell"/>
</dbReference>
<dbReference type="GO" id="GO:0003677">
    <property type="term" value="F:DNA binding"/>
    <property type="evidence" value="ECO:0007669"/>
    <property type="project" value="UniProtKB-KW"/>
</dbReference>
<dbReference type="GO" id="GO:0003887">
    <property type="term" value="F:DNA-directed DNA polymerase activity"/>
    <property type="evidence" value="ECO:0007669"/>
    <property type="project" value="UniProtKB-KW"/>
</dbReference>
<dbReference type="GO" id="GO:0000166">
    <property type="term" value="F:nucleotide binding"/>
    <property type="evidence" value="ECO:0007669"/>
    <property type="project" value="InterPro"/>
</dbReference>
<dbReference type="GO" id="GO:0006261">
    <property type="term" value="P:DNA-templated DNA replication"/>
    <property type="evidence" value="ECO:0007669"/>
    <property type="project" value="TreeGrafter"/>
</dbReference>
<dbReference type="GO" id="GO:0039693">
    <property type="term" value="P:viral DNA genome replication"/>
    <property type="evidence" value="ECO:0007669"/>
    <property type="project" value="UniProtKB-KW"/>
</dbReference>
<dbReference type="GO" id="GO:0019079">
    <property type="term" value="P:viral genome replication"/>
    <property type="evidence" value="ECO:0000314"/>
    <property type="project" value="UniProtKB"/>
</dbReference>
<dbReference type="FunFam" id="1.10.132.60:FF:000018">
    <property type="entry name" value="DNA polymerase"/>
    <property type="match status" value="1"/>
</dbReference>
<dbReference type="FunFam" id="1.10.287.690:FF:000010">
    <property type="entry name" value="DNA polymerase"/>
    <property type="match status" value="1"/>
</dbReference>
<dbReference type="FunFam" id="3.30.420.10:FF:000173">
    <property type="entry name" value="DNA polymerase"/>
    <property type="match status" value="1"/>
</dbReference>
<dbReference type="Gene3D" id="1.10.132.60">
    <property type="entry name" value="DNA polymerase family B, C-terminal domain"/>
    <property type="match status" value="1"/>
</dbReference>
<dbReference type="Gene3D" id="1.10.287.690">
    <property type="entry name" value="Helix hairpin bin"/>
    <property type="match status" value="1"/>
</dbReference>
<dbReference type="Gene3D" id="3.90.1600.10">
    <property type="entry name" value="Palm domain of DNA polymerase"/>
    <property type="match status" value="1"/>
</dbReference>
<dbReference type="Gene3D" id="3.30.420.10">
    <property type="entry name" value="Ribonuclease H-like superfamily/Ribonuclease H"/>
    <property type="match status" value="1"/>
</dbReference>
<dbReference type="InterPro" id="IPR006172">
    <property type="entry name" value="DNA-dir_DNA_pol_B"/>
</dbReference>
<dbReference type="InterPro" id="IPR017964">
    <property type="entry name" value="DNA-dir_DNA_pol_B_CS"/>
</dbReference>
<dbReference type="InterPro" id="IPR006133">
    <property type="entry name" value="DNA-dir_DNA_pol_B_exonuc"/>
</dbReference>
<dbReference type="InterPro" id="IPR006134">
    <property type="entry name" value="DNA-dir_DNA_pol_B_multi_dom"/>
</dbReference>
<dbReference type="InterPro" id="IPR043502">
    <property type="entry name" value="DNA/RNA_pol_sf"/>
</dbReference>
<dbReference type="InterPro" id="IPR042087">
    <property type="entry name" value="DNA_pol_B_thumb"/>
</dbReference>
<dbReference type="InterPro" id="IPR023211">
    <property type="entry name" value="DNA_pol_palm_dom_sf"/>
</dbReference>
<dbReference type="InterPro" id="IPR050240">
    <property type="entry name" value="DNA_pol_type-B"/>
</dbReference>
<dbReference type="InterPro" id="IPR012337">
    <property type="entry name" value="RNaseH-like_sf"/>
</dbReference>
<dbReference type="InterPro" id="IPR036397">
    <property type="entry name" value="RNaseH_sf"/>
</dbReference>
<dbReference type="PANTHER" id="PTHR10322">
    <property type="entry name" value="DNA POLYMERASE CATALYTIC SUBUNIT"/>
    <property type="match status" value="1"/>
</dbReference>
<dbReference type="PANTHER" id="PTHR10322:SF23">
    <property type="entry name" value="DNA POLYMERASE DELTA CATALYTIC SUBUNIT"/>
    <property type="match status" value="1"/>
</dbReference>
<dbReference type="Pfam" id="PF00136">
    <property type="entry name" value="DNA_pol_B"/>
    <property type="match status" value="1"/>
</dbReference>
<dbReference type="Pfam" id="PF03104">
    <property type="entry name" value="DNA_pol_B_exo1"/>
    <property type="match status" value="1"/>
</dbReference>
<dbReference type="PRINTS" id="PR00106">
    <property type="entry name" value="DNAPOLB"/>
</dbReference>
<dbReference type="SMART" id="SM00486">
    <property type="entry name" value="POLBc"/>
    <property type="match status" value="1"/>
</dbReference>
<dbReference type="SUPFAM" id="SSF56672">
    <property type="entry name" value="DNA/RNA polymerases"/>
    <property type="match status" value="1"/>
</dbReference>
<dbReference type="SUPFAM" id="SSF53098">
    <property type="entry name" value="Ribonuclease H-like"/>
    <property type="match status" value="1"/>
</dbReference>
<dbReference type="PROSITE" id="PS00116">
    <property type="entry name" value="DNA_POLYMERASE_B"/>
    <property type="match status" value="1"/>
</dbReference>
<organismHost>
    <name type="scientific">Lepidoptera</name>
    <name type="common">butterflies and moths</name>
    <dbReference type="NCBI Taxonomy" id="7088"/>
</organismHost>
<name>DPOL_NPVAC</name>
<evidence type="ECO:0000256" key="1">
    <source>
        <dbReference type="SAM" id="MobiDB-lite"/>
    </source>
</evidence>
<evidence type="ECO:0000269" key="2">
    <source>
    </source>
</evidence>
<evidence type="ECO:0000269" key="3">
    <source>
    </source>
</evidence>
<evidence type="ECO:0000305" key="4"/>
<keyword id="KW-0235">DNA replication</keyword>
<keyword id="KW-0238">DNA-binding</keyword>
<keyword id="KW-0239">DNA-directed DNA polymerase</keyword>
<keyword id="KW-0244">Early protein</keyword>
<keyword id="KW-1048">Host nucleus</keyword>
<keyword id="KW-0548">Nucleotidyltransferase</keyword>
<keyword id="KW-1185">Reference proteome</keyword>
<keyword id="KW-0808">Transferase</keyword>
<keyword id="KW-1194">Viral DNA replication</keyword>
<protein>
    <recommendedName>
        <fullName>DNA polymerase</fullName>
        <ecNumber>2.7.7.7</ecNumber>
    </recommendedName>
</protein>
<feature type="chain" id="PRO_0000046526" description="DNA polymerase">
    <location>
        <begin position="1"/>
        <end position="984"/>
    </location>
</feature>
<feature type="region of interest" description="Bipartite nuclear localization signal" evidence="3">
    <location>
        <begin position="804"/>
        <end position="827"/>
    </location>
</feature>
<feature type="region of interest" description="Monopartite nuclear localization signal" evidence="3">
    <location>
        <begin position="939"/>
        <end position="948"/>
    </location>
</feature>
<feature type="region of interest" description="Disordered" evidence="1">
    <location>
        <begin position="943"/>
        <end position="969"/>
    </location>
</feature>
<feature type="compositionally biased region" description="Acidic residues" evidence="1">
    <location>
        <begin position="947"/>
        <end position="966"/>
    </location>
</feature>
<feature type="sequence conflict" description="In Ref. 1; AAA46692." evidence="4" ref="1">
    <original>R</original>
    <variation>W</variation>
    <location>
        <position position="830"/>
    </location>
</feature>
<accession>P18131</accession>